<feature type="chain" id="PRO_0000312384" description="ATP synthase subunit alpha, mitochondrial">
    <location>
        <begin position="1"/>
        <end position="519"/>
    </location>
</feature>
<feature type="binding site" evidence="1">
    <location>
        <begin position="188"/>
        <end position="195"/>
    </location>
    <ligand>
        <name>ATP</name>
        <dbReference type="ChEBI" id="CHEBI:30616"/>
    </ligand>
</feature>
<feature type="site" description="Required for activity" evidence="1">
    <location>
        <position position="382"/>
    </location>
</feature>
<protein>
    <recommendedName>
        <fullName>ATP synthase subunit alpha, mitochondrial</fullName>
    </recommendedName>
</protein>
<dbReference type="EMBL" id="DQ336395">
    <property type="protein sequence ID" value="ABC60386.1"/>
    <property type="molecule type" value="Genomic_DNA"/>
</dbReference>
<dbReference type="RefSeq" id="YP_492635.1">
    <property type="nucleotide sequence ID" value="NC_007787.2"/>
</dbReference>
<dbReference type="SMR" id="Q2LCQ7"/>
<dbReference type="GeneID" id="3912628"/>
<dbReference type="GO" id="GO:0005743">
    <property type="term" value="C:mitochondrial inner membrane"/>
    <property type="evidence" value="ECO:0007669"/>
    <property type="project" value="UniProtKB-SubCell"/>
</dbReference>
<dbReference type="GO" id="GO:0045259">
    <property type="term" value="C:proton-transporting ATP synthase complex"/>
    <property type="evidence" value="ECO:0007669"/>
    <property type="project" value="UniProtKB-KW"/>
</dbReference>
<dbReference type="GO" id="GO:0043531">
    <property type="term" value="F:ADP binding"/>
    <property type="evidence" value="ECO:0007669"/>
    <property type="project" value="TreeGrafter"/>
</dbReference>
<dbReference type="GO" id="GO:0005524">
    <property type="term" value="F:ATP binding"/>
    <property type="evidence" value="ECO:0007669"/>
    <property type="project" value="UniProtKB-KW"/>
</dbReference>
<dbReference type="GO" id="GO:0046933">
    <property type="term" value="F:proton-transporting ATP synthase activity, rotational mechanism"/>
    <property type="evidence" value="ECO:0007669"/>
    <property type="project" value="InterPro"/>
</dbReference>
<dbReference type="CDD" id="cd18113">
    <property type="entry name" value="ATP-synt_F1_alpha_C"/>
    <property type="match status" value="1"/>
</dbReference>
<dbReference type="CDD" id="cd18116">
    <property type="entry name" value="ATP-synt_F1_alpha_N"/>
    <property type="match status" value="1"/>
</dbReference>
<dbReference type="CDD" id="cd01132">
    <property type="entry name" value="F1-ATPase_alpha_CD"/>
    <property type="match status" value="1"/>
</dbReference>
<dbReference type="FunFam" id="3.40.50.300:FF:000002">
    <property type="entry name" value="ATP synthase subunit alpha"/>
    <property type="match status" value="1"/>
</dbReference>
<dbReference type="Gene3D" id="2.40.30.20">
    <property type="match status" value="1"/>
</dbReference>
<dbReference type="Gene3D" id="1.20.150.20">
    <property type="entry name" value="ATP synthase alpha/beta chain, C-terminal domain"/>
    <property type="match status" value="1"/>
</dbReference>
<dbReference type="Gene3D" id="3.40.50.300">
    <property type="entry name" value="P-loop containing nucleotide triphosphate hydrolases"/>
    <property type="match status" value="1"/>
</dbReference>
<dbReference type="HAMAP" id="MF_01346">
    <property type="entry name" value="ATP_synth_alpha_bact"/>
    <property type="match status" value="1"/>
</dbReference>
<dbReference type="InterPro" id="IPR023366">
    <property type="entry name" value="ATP_synth_asu-like_sf"/>
</dbReference>
<dbReference type="InterPro" id="IPR000793">
    <property type="entry name" value="ATP_synth_asu_C"/>
</dbReference>
<dbReference type="InterPro" id="IPR038376">
    <property type="entry name" value="ATP_synth_asu_C_sf"/>
</dbReference>
<dbReference type="InterPro" id="IPR033732">
    <property type="entry name" value="ATP_synth_F1_a_nt-bd_dom"/>
</dbReference>
<dbReference type="InterPro" id="IPR005294">
    <property type="entry name" value="ATP_synth_F1_asu"/>
</dbReference>
<dbReference type="InterPro" id="IPR020003">
    <property type="entry name" value="ATPase_a/bsu_AS"/>
</dbReference>
<dbReference type="InterPro" id="IPR004100">
    <property type="entry name" value="ATPase_F1/V1/A1_a/bsu_N"/>
</dbReference>
<dbReference type="InterPro" id="IPR036121">
    <property type="entry name" value="ATPase_F1/V1/A1_a/bsu_N_sf"/>
</dbReference>
<dbReference type="InterPro" id="IPR000194">
    <property type="entry name" value="ATPase_F1/V1/A1_a/bsu_nucl-bd"/>
</dbReference>
<dbReference type="InterPro" id="IPR027417">
    <property type="entry name" value="P-loop_NTPase"/>
</dbReference>
<dbReference type="NCBIfam" id="TIGR00962">
    <property type="entry name" value="atpA"/>
    <property type="match status" value="1"/>
</dbReference>
<dbReference type="NCBIfam" id="NF009884">
    <property type="entry name" value="PRK13343.1"/>
    <property type="match status" value="1"/>
</dbReference>
<dbReference type="PANTHER" id="PTHR48082">
    <property type="entry name" value="ATP SYNTHASE SUBUNIT ALPHA, MITOCHONDRIAL"/>
    <property type="match status" value="1"/>
</dbReference>
<dbReference type="PANTHER" id="PTHR48082:SF2">
    <property type="entry name" value="ATP SYNTHASE SUBUNIT ALPHA, MITOCHONDRIAL"/>
    <property type="match status" value="1"/>
</dbReference>
<dbReference type="Pfam" id="PF00006">
    <property type="entry name" value="ATP-synt_ab"/>
    <property type="match status" value="1"/>
</dbReference>
<dbReference type="Pfam" id="PF00306">
    <property type="entry name" value="ATP-synt_ab_C"/>
    <property type="match status" value="1"/>
</dbReference>
<dbReference type="Pfam" id="PF02874">
    <property type="entry name" value="ATP-synt_ab_N"/>
    <property type="match status" value="1"/>
</dbReference>
<dbReference type="SUPFAM" id="SSF47917">
    <property type="entry name" value="C-terminal domain of alpha and beta subunits of F1 ATP synthase"/>
    <property type="match status" value="1"/>
</dbReference>
<dbReference type="SUPFAM" id="SSF50615">
    <property type="entry name" value="N-terminal domain of alpha and beta subunits of F1 ATP synthase"/>
    <property type="match status" value="1"/>
</dbReference>
<dbReference type="SUPFAM" id="SSF52540">
    <property type="entry name" value="P-loop containing nucleoside triphosphate hydrolases"/>
    <property type="match status" value="1"/>
</dbReference>
<dbReference type="PROSITE" id="PS00152">
    <property type="entry name" value="ATPASE_ALPHA_BETA"/>
    <property type="match status" value="1"/>
</dbReference>
<reference key="1">
    <citation type="journal article" date="2008" name="Mol. Biol. Evol.">
        <title>Mitochondrial genome evolution in the social amoebae.</title>
        <authorList>
            <person name="Heidel A.J."/>
            <person name="Gloeckner G."/>
        </authorList>
    </citation>
    <scope>NUCLEOTIDE SEQUENCE [LARGE SCALE GENOMIC DNA]</scope>
</reference>
<name>ATPA_DICCI</name>
<organism>
    <name type="scientific">Dictyostelium citrinum</name>
    <name type="common">Slime mold</name>
    <dbReference type="NCBI Taxonomy" id="361072"/>
    <lineage>
        <taxon>Eukaryota</taxon>
        <taxon>Amoebozoa</taxon>
        <taxon>Evosea</taxon>
        <taxon>Eumycetozoa</taxon>
        <taxon>Dictyostelia</taxon>
        <taxon>Dictyosteliales</taxon>
        <taxon>Dictyosteliaceae</taxon>
        <taxon>Dictyostelium</taxon>
    </lineage>
</organism>
<evidence type="ECO:0000250" key="1"/>
<evidence type="ECO:0000305" key="2"/>
<keyword id="KW-0066">ATP synthesis</keyword>
<keyword id="KW-0067">ATP-binding</keyword>
<keyword id="KW-0139">CF(1)</keyword>
<keyword id="KW-0375">Hydrogen ion transport</keyword>
<keyword id="KW-0406">Ion transport</keyword>
<keyword id="KW-0472">Membrane</keyword>
<keyword id="KW-0496">Mitochondrion</keyword>
<keyword id="KW-0999">Mitochondrion inner membrane</keyword>
<keyword id="KW-0547">Nucleotide-binding</keyword>
<keyword id="KW-0813">Transport</keyword>
<proteinExistence type="inferred from homology"/>
<geneLocation type="mitochondrion"/>
<gene>
    <name type="primary">atp1</name>
</gene>
<accession>Q2LCQ7</accession>
<sequence>MQLERILTETNIERSKFKQYKVLSKYINAVAKKYTLNNVSNKYGKVLFIKDGVVKVSGLSQIKIGEKVEFVGKNLFGMALNLEATSVGIVIFGEDTAIYEGVIVKRCEQNFAIKVDKTMLGRVVDVLGQPIDGLGELKDTKTTRVMSVERKAPGIVTRKSVHESMLTGVKMVDALLPIGRGQRELIIGDRQTGKSAIAVDAILNQQVNKDIVCIYVAVGQKKSTVRRLVEMLNTKGALEYTIVVVSTASDAAPLQFLAPYTGCTIGEYFRDEGKHALIVYDDLSKHAVAYRQMSLLLRRPPGREAYPGDVFYIHSRLLERAAKLNEKYGCGSLTAFPIVETQAGDVSAYIPTNIISITDGQIFLEKELFNKGIRPAVNVGLSVSRVGSAAQSAVMKKLAGALKLELAQYRELARFEQFSSNADAVTTQILKKGKLTIELLKQVNNNPMAVGMEALMIFAMSTSYFQNLDLSLVRAEEAKLLQYIHSVSSFKLYAACVDAVKAFNPKDTVFTEMCQSYVK</sequence>
<comment type="function">
    <text evidence="1">Mitochondrial membrane ATP synthase (F(1)F(0) ATP synthase or Complex V) produces ATP from ADP in the presence of a proton gradient across the membrane which is generated by electron transport complexes of the respiratory chain. F-type ATPases consist of two structural domains, F(1) - containing the extramembraneous catalytic core, and F(0) - containing the membrane proton channel, linked together by a central stalk and a peripheral stalk. During catalysis, ATP synthesis in the catalytic domain of F(1) is coupled via a rotary mechanism of the central stalk subunits to proton translocation. Subunits alpha and beta form the catalytic core in F(1). Rotation of the central stalk against the surrounding alpha(3)beta(3) subunits leads to hydrolysis of ATP in three separate catalytic sites on the beta subunits. Subunit alpha does not bear the catalytic high-affinity ATP-binding sites (By similarity).</text>
</comment>
<comment type="subunit">
    <text evidence="1">F-type ATPases have 2 components, CF(1) - the catalytic core - and CF(0) - the membrane proton channel. CF(1) has five subunits: alpha(3), beta(3), gamma(1), delta(1), epsilon(1). CF(0) has three main subunits: a, b and c (By similarity).</text>
</comment>
<comment type="subcellular location">
    <subcellularLocation>
        <location>Mitochondrion</location>
    </subcellularLocation>
    <subcellularLocation>
        <location evidence="1">Mitochondrion inner membrane</location>
    </subcellularLocation>
</comment>
<comment type="similarity">
    <text evidence="2">Belongs to the ATPase alpha/beta chains family.</text>
</comment>